<dbReference type="EMBL" id="M11813">
    <property type="protein sequence ID" value="AAA88499.1"/>
    <property type="molecule type" value="Genomic_DNA"/>
</dbReference>
<dbReference type="PIR" id="F29004">
    <property type="entry name" value="WRBP70"/>
</dbReference>
<dbReference type="Proteomes" id="UP000000855">
    <property type="component" value="Segment"/>
</dbReference>
<dbReference type="GO" id="GO:0006260">
    <property type="term" value="P:DNA replication"/>
    <property type="evidence" value="ECO:0007669"/>
    <property type="project" value="UniProtKB-KW"/>
</dbReference>
<dbReference type="GO" id="GO:0039693">
    <property type="term" value="P:viral DNA genome replication"/>
    <property type="evidence" value="ECO:0007669"/>
    <property type="project" value="UniProtKB-KW"/>
</dbReference>
<dbReference type="InterPro" id="IPR035184">
    <property type="entry name" value="Phage_Gp17"/>
</dbReference>
<dbReference type="Pfam" id="PF17549">
    <property type="entry name" value="Phage_Gp17"/>
    <property type="match status" value="1"/>
</dbReference>
<evidence type="ECO:0000250" key="1">
    <source>
        <dbReference type="UniProtKB" id="P03686"/>
    </source>
</evidence>
<evidence type="ECO:0000305" key="2"/>
<protein>
    <recommendedName>
        <fullName>DNA replication protein 17</fullName>
    </recommendedName>
    <alternativeName>
        <fullName>Gene product 17</fullName>
        <shortName>gp17</shortName>
    </alternativeName>
    <alternativeName>
        <fullName>Protein p17</fullName>
    </alternativeName>
</protein>
<accession>P08389</accession>
<organismHost>
    <name type="scientific">Bacillus subtilis</name>
    <dbReference type="NCBI Taxonomy" id="1423"/>
</organismHost>
<keyword id="KW-0235">DNA replication</keyword>
<keyword id="KW-0244">Early protein</keyword>
<keyword id="KW-1194">Viral DNA replication</keyword>
<feature type="chain" id="PRO_0000106606" description="DNA replication protein 17">
    <location>
        <begin position="1"/>
        <end position="174"/>
    </location>
</feature>
<name>GP17_BPPZA</name>
<reference key="1">
    <citation type="journal article" date="1986" name="Gene">
        <title>Nucleotide sequence of the right early region of Bacillus subtilis phage PZA completes the 19366-bp sequence of PZA genome. Comparison with the homologous sequence of phage phi 29.</title>
        <authorList>
            <person name="Paces V."/>
            <person name="Vlcek C."/>
            <person name="Urbanek P."/>
            <person name="Hostomsky Z."/>
        </authorList>
    </citation>
    <scope>NUCLEOTIDE SEQUENCE [GENOMIC DNA]</scope>
</reference>
<sequence>MNNYQLTINEVIEIINRNTDINKLVAKKDNLYPTDLYDLDKQQLIAIILNSDFALSSIKRALLEVTVEELGEQDNDDDLDEIDSELYEDAEASDVPHETIVKVFEADKSIVTFNGEKLKHYVNVDVDNSSVDEVKKIAKEISEHDFNDEDIEEAELKTFKNHLPTIYSMKKENK</sequence>
<proteinExistence type="inferred from homology"/>
<comment type="function">
    <text evidence="1">Involved in the replication of viral DNA. It is required at the very beginning of the virus amplification, conditions in which a low number of viral DNA molecules enter the host cell, possibly to recruit the limiting amount of initiation factors at the replication origins. Once the infection process is established and the other replication proteins reach optimal concentration, it becomes dispensable. Optimizes the binding of protein p6 at the viral DNA ends, thus favoring the initiation of replication.</text>
</comment>
<comment type="subunit">
    <text evidence="1">Homodimer. Interacts with the histone-like protein p6; this interaction optimizes the binding of protein p6 at the viral DNA ends, thus favoring the initiation of replication.</text>
</comment>
<comment type="similarity">
    <text evidence="2">Belongs to the phi29likevirus protein p56 family.</text>
</comment>
<gene>
    <name type="primary">17</name>
</gene>
<organism>
    <name type="scientific">Bacillus phage PZA</name>
    <name type="common">Bacteriophage PZA</name>
    <dbReference type="NCBI Taxonomy" id="10757"/>
    <lineage>
        <taxon>Viruses</taxon>
        <taxon>Duplodnaviria</taxon>
        <taxon>Heunggongvirae</taxon>
        <taxon>Uroviricota</taxon>
        <taxon>Caudoviricetes</taxon>
        <taxon>Salasmaviridae</taxon>
        <taxon>Picovirinae</taxon>
        <taxon>Salasvirus</taxon>
        <taxon>Salasvirus PZA</taxon>
    </lineage>
</organism>